<protein>
    <recommendedName>
        <fullName>Uncharacterized protein tam10</fullName>
    </recommendedName>
    <alternativeName>
        <fullName>Transcripts altered in meiosis protein 10</fullName>
    </alternativeName>
</protein>
<reference key="1">
    <citation type="journal article" date="2002" name="Nature">
        <title>The genome sequence of Schizosaccharomyces pombe.</title>
        <authorList>
            <person name="Wood V."/>
            <person name="Gwilliam R."/>
            <person name="Rajandream M.A."/>
            <person name="Lyne M.H."/>
            <person name="Lyne R."/>
            <person name="Stewart A."/>
            <person name="Sgouros J.G."/>
            <person name="Peat N."/>
            <person name="Hayles J."/>
            <person name="Baker S.G."/>
            <person name="Basham D."/>
            <person name="Bowman S."/>
            <person name="Brooks K."/>
            <person name="Brown D."/>
            <person name="Brown S."/>
            <person name="Chillingworth T."/>
            <person name="Churcher C.M."/>
            <person name="Collins M."/>
            <person name="Connor R."/>
            <person name="Cronin A."/>
            <person name="Davis P."/>
            <person name="Feltwell T."/>
            <person name="Fraser A."/>
            <person name="Gentles S."/>
            <person name="Goble A."/>
            <person name="Hamlin N."/>
            <person name="Harris D.E."/>
            <person name="Hidalgo J."/>
            <person name="Hodgson G."/>
            <person name="Holroyd S."/>
            <person name="Hornsby T."/>
            <person name="Howarth S."/>
            <person name="Huckle E.J."/>
            <person name="Hunt S."/>
            <person name="Jagels K."/>
            <person name="James K.D."/>
            <person name="Jones L."/>
            <person name="Jones M."/>
            <person name="Leather S."/>
            <person name="McDonald S."/>
            <person name="McLean J."/>
            <person name="Mooney P."/>
            <person name="Moule S."/>
            <person name="Mungall K.L."/>
            <person name="Murphy L.D."/>
            <person name="Niblett D."/>
            <person name="Odell C."/>
            <person name="Oliver K."/>
            <person name="O'Neil S."/>
            <person name="Pearson D."/>
            <person name="Quail M.A."/>
            <person name="Rabbinowitsch E."/>
            <person name="Rutherford K.M."/>
            <person name="Rutter S."/>
            <person name="Saunders D."/>
            <person name="Seeger K."/>
            <person name="Sharp S."/>
            <person name="Skelton J."/>
            <person name="Simmonds M.N."/>
            <person name="Squares R."/>
            <person name="Squares S."/>
            <person name="Stevens K."/>
            <person name="Taylor K."/>
            <person name="Taylor R.G."/>
            <person name="Tivey A."/>
            <person name="Walsh S.V."/>
            <person name="Warren T."/>
            <person name="Whitehead S."/>
            <person name="Woodward J.R."/>
            <person name="Volckaert G."/>
            <person name="Aert R."/>
            <person name="Robben J."/>
            <person name="Grymonprez B."/>
            <person name="Weltjens I."/>
            <person name="Vanstreels E."/>
            <person name="Rieger M."/>
            <person name="Schaefer M."/>
            <person name="Mueller-Auer S."/>
            <person name="Gabel C."/>
            <person name="Fuchs M."/>
            <person name="Duesterhoeft A."/>
            <person name="Fritzc C."/>
            <person name="Holzer E."/>
            <person name="Moestl D."/>
            <person name="Hilbert H."/>
            <person name="Borzym K."/>
            <person name="Langer I."/>
            <person name="Beck A."/>
            <person name="Lehrach H."/>
            <person name="Reinhardt R."/>
            <person name="Pohl T.M."/>
            <person name="Eger P."/>
            <person name="Zimmermann W."/>
            <person name="Wedler H."/>
            <person name="Wambutt R."/>
            <person name="Purnelle B."/>
            <person name="Goffeau A."/>
            <person name="Cadieu E."/>
            <person name="Dreano S."/>
            <person name="Gloux S."/>
            <person name="Lelaure V."/>
            <person name="Mottier S."/>
            <person name="Galibert F."/>
            <person name="Aves S.J."/>
            <person name="Xiang Z."/>
            <person name="Hunt C."/>
            <person name="Moore K."/>
            <person name="Hurst S.M."/>
            <person name="Lucas M."/>
            <person name="Rochet M."/>
            <person name="Gaillardin C."/>
            <person name="Tallada V.A."/>
            <person name="Garzon A."/>
            <person name="Thode G."/>
            <person name="Daga R.R."/>
            <person name="Cruzado L."/>
            <person name="Jimenez J."/>
            <person name="Sanchez M."/>
            <person name="del Rey F."/>
            <person name="Benito J."/>
            <person name="Dominguez A."/>
            <person name="Revuelta J.L."/>
            <person name="Moreno S."/>
            <person name="Armstrong J."/>
            <person name="Forsburg S.L."/>
            <person name="Cerutti L."/>
            <person name="Lowe T."/>
            <person name="McCombie W.R."/>
            <person name="Paulsen I."/>
            <person name="Potashkin J."/>
            <person name="Shpakovski G.V."/>
            <person name="Ussery D."/>
            <person name="Barrell B.G."/>
            <person name="Nurse P."/>
        </authorList>
    </citation>
    <scope>NUCLEOTIDE SEQUENCE [LARGE SCALE GENOMIC DNA]</scope>
    <source>
        <strain>972 / ATCC 24843</strain>
    </source>
</reference>
<reference key="2">
    <citation type="journal article" date="2011" name="Genetics">
        <title>Augmented annotation of the Schizosaccharomyces pombe genome reveals additional genes required for growth and viability.</title>
        <authorList>
            <person name="Bitton D.A."/>
            <person name="Wood V."/>
            <person name="Scutt P.J."/>
            <person name="Grallert A."/>
            <person name="Yates T."/>
            <person name="Smith D.L."/>
            <person name="Hagan I.M."/>
            <person name="Miller C.J."/>
        </authorList>
    </citation>
    <scope>IDENTIFICATION BY MASS SPECTROMETRY</scope>
    <scope>INDUCTION</scope>
</reference>
<comment type="induction">
    <text evidence="3">Differentially expressed during meiosis.</text>
</comment>
<accession>G2TRQ9</accession>
<feature type="chain" id="PRO_0000416519" description="Uncharacterized protein tam10">
    <location>
        <begin position="1"/>
        <end position="168"/>
    </location>
</feature>
<feature type="region of interest" description="Disordered" evidence="2">
    <location>
        <begin position="1"/>
        <end position="35"/>
    </location>
</feature>
<feature type="region of interest" description="Disordered" evidence="2">
    <location>
        <begin position="48"/>
        <end position="97"/>
    </location>
</feature>
<feature type="region of interest" description="Disordered" evidence="2">
    <location>
        <begin position="126"/>
        <end position="168"/>
    </location>
</feature>
<feature type="coiled-coil region" evidence="1">
    <location>
        <begin position="29"/>
        <end position="95"/>
    </location>
</feature>
<feature type="compositionally biased region" description="Basic and acidic residues" evidence="2">
    <location>
        <begin position="68"/>
        <end position="85"/>
    </location>
</feature>
<feature type="compositionally biased region" description="Polar residues" evidence="2">
    <location>
        <begin position="126"/>
        <end position="139"/>
    </location>
</feature>
<feature type="compositionally biased region" description="Basic and acidic residues" evidence="2">
    <location>
        <begin position="140"/>
        <end position="150"/>
    </location>
</feature>
<feature type="compositionally biased region" description="Basic residues" evidence="2">
    <location>
        <begin position="157"/>
        <end position="168"/>
    </location>
</feature>
<name>TAM10_SCHPO</name>
<dbReference type="EMBL" id="CU329671">
    <property type="protein sequence ID" value="CCD31369.1"/>
    <property type="molecule type" value="Genomic_DNA"/>
</dbReference>
<dbReference type="RefSeq" id="XP_004001716.1">
    <property type="nucleotide sequence ID" value="XM_004001667.1"/>
</dbReference>
<dbReference type="SMR" id="G2TRQ9"/>
<dbReference type="BioGRID" id="4253814">
    <property type="interactions" value="1"/>
</dbReference>
<dbReference type="iPTMnet" id="G2TRQ9"/>
<dbReference type="PaxDb" id="4896-SPBC14C8.19.1"/>
<dbReference type="EnsemblFungi" id="SPBC14C8.19.1">
    <property type="protein sequence ID" value="SPBC14C8.19.1:pep"/>
    <property type="gene ID" value="SPBC14C8.19"/>
</dbReference>
<dbReference type="PomBase" id="SPBC14C8.19">
    <property type="gene designation" value="tam10"/>
</dbReference>
<dbReference type="VEuPathDB" id="FungiDB:SPBC14C8.19"/>
<dbReference type="HOGENOM" id="CLU_1611743_0_0_1"/>
<dbReference type="InParanoid" id="G2TRQ9"/>
<dbReference type="OMA" id="EKKAPIW"/>
<dbReference type="PRO" id="PR:G2TRQ9"/>
<dbReference type="Proteomes" id="UP000002485">
    <property type="component" value="Chromosome II"/>
</dbReference>
<dbReference type="GO" id="GO:0005730">
    <property type="term" value="C:nucleolus"/>
    <property type="evidence" value="ECO:0000250"/>
    <property type="project" value="PomBase"/>
</dbReference>
<dbReference type="GO" id="GO:0003723">
    <property type="term" value="F:RNA binding"/>
    <property type="evidence" value="ECO:0000266"/>
    <property type="project" value="PomBase"/>
</dbReference>
<dbReference type="InterPro" id="IPR028124">
    <property type="entry name" value="SMAP_dom"/>
</dbReference>
<dbReference type="Pfam" id="PF15477">
    <property type="entry name" value="SMAP"/>
    <property type="match status" value="1"/>
</dbReference>
<sequence length="168" mass="19111">MGSSKSSKKDKQIHPFGTDVSTFRKLSSKEKKKLDEKELKQYKKLKHKVKKLKKEERERSSIKNTKTLAEDPMVKNVAENDHDQMKNSLSRSQDKGNTDYWLAASLSGGNQRKSKFLKMLGIKNAASITESSPSAQSNKTNDKQREKELEQQYMHGVLHKGTKKGLGM</sequence>
<evidence type="ECO:0000255" key="1"/>
<evidence type="ECO:0000256" key="2">
    <source>
        <dbReference type="SAM" id="MobiDB-lite"/>
    </source>
</evidence>
<evidence type="ECO:0000269" key="3">
    <source>
    </source>
</evidence>
<gene>
    <name type="primary">tam10</name>
    <name type="ORF">SPBC14C8.19</name>
</gene>
<proteinExistence type="evidence at protein level"/>
<organism>
    <name type="scientific">Schizosaccharomyces pombe (strain 972 / ATCC 24843)</name>
    <name type="common">Fission yeast</name>
    <dbReference type="NCBI Taxonomy" id="284812"/>
    <lineage>
        <taxon>Eukaryota</taxon>
        <taxon>Fungi</taxon>
        <taxon>Dikarya</taxon>
        <taxon>Ascomycota</taxon>
        <taxon>Taphrinomycotina</taxon>
        <taxon>Schizosaccharomycetes</taxon>
        <taxon>Schizosaccharomycetales</taxon>
        <taxon>Schizosaccharomycetaceae</taxon>
        <taxon>Schizosaccharomyces</taxon>
    </lineage>
</organism>
<keyword id="KW-0175">Coiled coil</keyword>
<keyword id="KW-1185">Reference proteome</keyword>